<feature type="chain" id="PRO_0000189668" description="Carbohydrate sulfotransferase 12">
    <location>
        <begin position="1"/>
        <end position="414"/>
    </location>
</feature>
<feature type="topological domain" description="Cytoplasmic" evidence="2">
    <location>
        <begin position="1"/>
        <end position="5"/>
    </location>
</feature>
<feature type="transmembrane region" description="Helical; Signal-anchor for type II membrane protein" evidence="2">
    <location>
        <begin position="6"/>
        <end position="26"/>
    </location>
</feature>
<feature type="topological domain" description="Lumenal" evidence="2">
    <location>
        <begin position="27"/>
        <end position="414"/>
    </location>
</feature>
<feature type="region of interest" description="Disordered" evidence="3">
    <location>
        <begin position="80"/>
        <end position="125"/>
    </location>
</feature>
<feature type="compositionally biased region" description="Basic and acidic residues" evidence="3">
    <location>
        <begin position="99"/>
        <end position="125"/>
    </location>
</feature>
<feature type="binding site" evidence="1">
    <location>
        <begin position="171"/>
        <end position="177"/>
    </location>
    <ligand>
        <name>3'-phosphoadenylyl sulfate</name>
        <dbReference type="ChEBI" id="CHEBI:58339"/>
    </ligand>
</feature>
<feature type="binding site" evidence="1">
    <location>
        <begin position="245"/>
        <end position="253"/>
    </location>
    <ligand>
        <name>3'-phosphoadenylyl sulfate</name>
        <dbReference type="ChEBI" id="CHEBI:58339"/>
    </ligand>
</feature>
<feature type="glycosylation site" description="N-linked (GlcNAc...) asparagine" evidence="2">
    <location>
        <position position="134"/>
    </location>
</feature>
<feature type="glycosylation site" description="N-linked (GlcNAc...) asparagine" evidence="2">
    <location>
        <position position="209"/>
    </location>
</feature>
<feature type="glycosylation site" description="N-linked (GlcNAc...) asparagine" evidence="2">
    <location>
        <position position="280"/>
    </location>
</feature>
<feature type="glycosylation site" description="N-linked (GlcNAc...) asparagine" evidence="2">
    <location>
        <position position="370"/>
    </location>
</feature>
<feature type="sequence variant" id="VAR_021471" description="In dbSNP:rs3735099.">
    <original>P</original>
    <variation>H</variation>
    <location>
        <position position="52"/>
    </location>
</feature>
<feature type="sequence variant" id="VAR_021472" description="In dbSNP:rs3735100.">
    <original>T</original>
    <variation>S</variation>
    <location>
        <position position="61"/>
    </location>
</feature>
<feature type="sequence variant" id="VAR_033738" description="In dbSNP:rs12536223.">
    <original>P</original>
    <variation>L</variation>
    <location>
        <position position="94"/>
    </location>
</feature>
<feature type="sequence variant" id="VAR_021473" description="In dbSNP:rs17132395.">
    <original>R</original>
    <variation>S</variation>
    <location>
        <position position="109"/>
    </location>
</feature>
<feature type="sequence variant" id="VAR_021474" description="In dbSNP:rs17132399.">
    <original>A</original>
    <variation>P</variation>
    <location>
        <position position="145"/>
    </location>
</feature>
<feature type="sequence conflict" description="In Ref. 1; AAF81692." evidence="5" ref="1">
    <original>G</original>
    <variation>S</variation>
    <location>
        <position position="30"/>
    </location>
</feature>
<feature type="sequence conflict" description="In Ref. 1; AAF81692." evidence="5" ref="1">
    <original>R</original>
    <variation>K</variation>
    <location>
        <position position="42"/>
    </location>
</feature>
<feature type="sequence conflict" description="In Ref. 1; AAF81692." evidence="5" ref="1">
    <original>P</original>
    <variation>L</variation>
    <location>
        <position position="92"/>
    </location>
</feature>
<feature type="sequence conflict" description="In Ref. 1; AAF81692." evidence="5" ref="1">
    <original>W</original>
    <variation>C</variation>
    <location>
        <position position="380"/>
    </location>
</feature>
<accession>Q9NRB3</accession>
<accession>A4D1Z9</accession>
<accession>Q502W3</accession>
<accession>Q9NXY7</accession>
<protein>
    <recommendedName>
        <fullName>Carbohydrate sulfotransferase 12</fullName>
        <ecNumber>2.8.2.5</ecNumber>
    </recommendedName>
    <alternativeName>
        <fullName>Chondroitin 4-O-sulfotransferase 2</fullName>
    </alternativeName>
    <alternativeName>
        <fullName>Chondroitin 4-sulfotransferase 2</fullName>
        <shortName>C4ST-2</shortName>
        <shortName>C4ST2</shortName>
    </alternativeName>
    <alternativeName>
        <fullName>Sulfotransferase Hlo</fullName>
    </alternativeName>
</protein>
<keyword id="KW-0119">Carbohydrate metabolism</keyword>
<keyword id="KW-0325">Glycoprotein</keyword>
<keyword id="KW-0333">Golgi apparatus</keyword>
<keyword id="KW-0472">Membrane</keyword>
<keyword id="KW-1267">Proteomics identification</keyword>
<keyword id="KW-1185">Reference proteome</keyword>
<keyword id="KW-0735">Signal-anchor</keyword>
<keyword id="KW-0808">Transferase</keyword>
<keyword id="KW-0812">Transmembrane</keyword>
<keyword id="KW-1133">Transmembrane helix</keyword>
<proteinExistence type="evidence at protein level"/>
<organism>
    <name type="scientific">Homo sapiens</name>
    <name type="common">Human</name>
    <dbReference type="NCBI Taxonomy" id="9606"/>
    <lineage>
        <taxon>Eukaryota</taxon>
        <taxon>Metazoa</taxon>
        <taxon>Chordata</taxon>
        <taxon>Craniata</taxon>
        <taxon>Vertebrata</taxon>
        <taxon>Euteleostomi</taxon>
        <taxon>Mammalia</taxon>
        <taxon>Eutheria</taxon>
        <taxon>Euarchontoglires</taxon>
        <taxon>Primates</taxon>
        <taxon>Haplorrhini</taxon>
        <taxon>Catarrhini</taxon>
        <taxon>Hominidae</taxon>
        <taxon>Homo</taxon>
    </lineage>
</organism>
<name>CHSTC_HUMAN</name>
<gene>
    <name type="primary">CHST12</name>
    <name type="ORF">UNQ500/PRO1017</name>
</gene>
<comment type="function">
    <text>Catalyzes the transfer of sulfate to position 4 of the N-acetylgalactosamine (GalNAc) residue of chondroitin and desulfated dermatan sulfate. Chondroitin sulfate constitutes the predominant proteoglycan present in cartilage and is distributed on the surfaces of many cells and extracellular matrices. Activity toward partially desulfated dermatan sulfate is however lower. Does not form 4, 6-di-O-sulfated GalNAc when chondroitin sulfate C is used as an acceptor.</text>
</comment>
<comment type="catalytic activity">
    <reaction evidence="4">
        <text>chondroitin beta-D-glucuronate + n 3'-phosphoadenylyl sulfate = chondroitin 4'-sulfate + n adenosine 3',5'-bisphosphate + n H(+)</text>
        <dbReference type="Rhea" id="RHEA:16101"/>
        <dbReference type="Rhea" id="RHEA-COMP:9827"/>
        <dbReference type="Rhea" id="RHEA-COMP:9829"/>
        <dbReference type="ChEBI" id="CHEBI:15378"/>
        <dbReference type="ChEBI" id="CHEBI:57652"/>
        <dbReference type="ChEBI" id="CHEBI:58339"/>
        <dbReference type="ChEBI" id="CHEBI:58343"/>
        <dbReference type="ChEBI" id="CHEBI:58422"/>
        <dbReference type="EC" id="2.8.2.5"/>
    </reaction>
</comment>
<comment type="subcellular location">
    <subcellularLocation>
        <location evidence="1">Golgi apparatus membrane</location>
        <topology evidence="1">Single-pass type II membrane protein</topology>
    </subcellularLocation>
</comment>
<comment type="tissue specificity">
    <text evidence="4">Widely expressed. Expressed a high level in spinal chord, heart, spleen, thyroid, pituitary gland, adrenal gland, peripheral blood leukocytes, thymus, lung, small intestine, fetal kidney, fetal spleen and fetal lung.</text>
</comment>
<comment type="similarity">
    <text evidence="5">Belongs to the sulfotransferase 2 family.</text>
</comment>
<reference key="1">
    <citation type="journal article" date="2000" name="J. Biol. Chem.">
        <title>Molecular cloning and expression of two distinct human chondroitin 4-O-sulfotransferases that belong to the HNK-1 sulfotransferase gene family.</title>
        <authorList>
            <person name="Hiraoka N."/>
            <person name="Nakagawa H."/>
            <person name="Ong E."/>
            <person name="Akama O.T."/>
            <person name="Fukuda N.M."/>
            <person name="Fukuda M."/>
        </authorList>
    </citation>
    <scope>NUCLEOTIDE SEQUENCE [MRNA]</scope>
    <scope>ENZYME ACTIVITY</scope>
    <scope>TISSUE SPECIFICITY</scope>
</reference>
<reference key="2">
    <citation type="submission" date="2000-05" db="EMBL/GenBank/DDBJ databases">
        <title>Cloning and expression of molecules homologous to HNK-1 sulfotransferase.</title>
        <authorList>
            <person name="Xia G."/>
            <person name="Evers M.R."/>
            <person name="Schachner M."/>
        </authorList>
    </citation>
    <scope>NUCLEOTIDE SEQUENCE [MRNA]</scope>
</reference>
<reference key="3">
    <citation type="journal article" date="2003" name="Genome Res.">
        <title>The secreted protein discovery initiative (SPDI), a large-scale effort to identify novel human secreted and transmembrane proteins: a bioinformatics assessment.</title>
        <authorList>
            <person name="Clark H.F."/>
            <person name="Gurney A.L."/>
            <person name="Abaya E."/>
            <person name="Baker K."/>
            <person name="Baldwin D.T."/>
            <person name="Brush J."/>
            <person name="Chen J."/>
            <person name="Chow B."/>
            <person name="Chui C."/>
            <person name="Crowley C."/>
            <person name="Currell B."/>
            <person name="Deuel B."/>
            <person name="Dowd P."/>
            <person name="Eaton D."/>
            <person name="Foster J.S."/>
            <person name="Grimaldi C."/>
            <person name="Gu Q."/>
            <person name="Hass P.E."/>
            <person name="Heldens S."/>
            <person name="Huang A."/>
            <person name="Kim H.S."/>
            <person name="Klimowski L."/>
            <person name="Jin Y."/>
            <person name="Johnson S."/>
            <person name="Lee J."/>
            <person name="Lewis L."/>
            <person name="Liao D."/>
            <person name="Mark M.R."/>
            <person name="Robbie E."/>
            <person name="Sanchez C."/>
            <person name="Schoenfeld J."/>
            <person name="Seshagiri S."/>
            <person name="Simmons L."/>
            <person name="Singh J."/>
            <person name="Smith V."/>
            <person name="Stinson J."/>
            <person name="Vagts A."/>
            <person name="Vandlen R.L."/>
            <person name="Watanabe C."/>
            <person name="Wieand D."/>
            <person name="Woods K."/>
            <person name="Xie M.-H."/>
            <person name="Yansura D.G."/>
            <person name="Yi S."/>
            <person name="Yu G."/>
            <person name="Yuan J."/>
            <person name="Zhang M."/>
            <person name="Zhang Z."/>
            <person name="Goddard A.D."/>
            <person name="Wood W.I."/>
            <person name="Godowski P.J."/>
            <person name="Gray A.M."/>
        </authorList>
    </citation>
    <scope>NUCLEOTIDE SEQUENCE [LARGE SCALE MRNA]</scope>
</reference>
<reference key="4">
    <citation type="journal article" date="2004" name="Nat. Genet.">
        <title>Complete sequencing and characterization of 21,243 full-length human cDNAs.</title>
        <authorList>
            <person name="Ota T."/>
            <person name="Suzuki Y."/>
            <person name="Nishikawa T."/>
            <person name="Otsuki T."/>
            <person name="Sugiyama T."/>
            <person name="Irie R."/>
            <person name="Wakamatsu A."/>
            <person name="Hayashi K."/>
            <person name="Sato H."/>
            <person name="Nagai K."/>
            <person name="Kimura K."/>
            <person name="Makita H."/>
            <person name="Sekine M."/>
            <person name="Obayashi M."/>
            <person name="Nishi T."/>
            <person name="Shibahara T."/>
            <person name="Tanaka T."/>
            <person name="Ishii S."/>
            <person name="Yamamoto J."/>
            <person name="Saito K."/>
            <person name="Kawai Y."/>
            <person name="Isono Y."/>
            <person name="Nakamura Y."/>
            <person name="Nagahari K."/>
            <person name="Murakami K."/>
            <person name="Yasuda T."/>
            <person name="Iwayanagi T."/>
            <person name="Wagatsuma M."/>
            <person name="Shiratori A."/>
            <person name="Sudo H."/>
            <person name="Hosoiri T."/>
            <person name="Kaku Y."/>
            <person name="Kodaira H."/>
            <person name="Kondo H."/>
            <person name="Sugawara M."/>
            <person name="Takahashi M."/>
            <person name="Kanda K."/>
            <person name="Yokoi T."/>
            <person name="Furuya T."/>
            <person name="Kikkawa E."/>
            <person name="Omura Y."/>
            <person name="Abe K."/>
            <person name="Kamihara K."/>
            <person name="Katsuta N."/>
            <person name="Sato K."/>
            <person name="Tanikawa M."/>
            <person name="Yamazaki M."/>
            <person name="Ninomiya K."/>
            <person name="Ishibashi T."/>
            <person name="Yamashita H."/>
            <person name="Murakawa K."/>
            <person name="Fujimori K."/>
            <person name="Tanai H."/>
            <person name="Kimata M."/>
            <person name="Watanabe M."/>
            <person name="Hiraoka S."/>
            <person name="Chiba Y."/>
            <person name="Ishida S."/>
            <person name="Ono Y."/>
            <person name="Takiguchi S."/>
            <person name="Watanabe S."/>
            <person name="Yosida M."/>
            <person name="Hotuta T."/>
            <person name="Kusano J."/>
            <person name="Kanehori K."/>
            <person name="Takahashi-Fujii A."/>
            <person name="Hara H."/>
            <person name="Tanase T.-O."/>
            <person name="Nomura Y."/>
            <person name="Togiya S."/>
            <person name="Komai F."/>
            <person name="Hara R."/>
            <person name="Takeuchi K."/>
            <person name="Arita M."/>
            <person name="Imose N."/>
            <person name="Musashino K."/>
            <person name="Yuuki H."/>
            <person name="Oshima A."/>
            <person name="Sasaki N."/>
            <person name="Aotsuka S."/>
            <person name="Yoshikawa Y."/>
            <person name="Matsunawa H."/>
            <person name="Ichihara T."/>
            <person name="Shiohata N."/>
            <person name="Sano S."/>
            <person name="Moriya S."/>
            <person name="Momiyama H."/>
            <person name="Satoh N."/>
            <person name="Takami S."/>
            <person name="Terashima Y."/>
            <person name="Suzuki O."/>
            <person name="Nakagawa S."/>
            <person name="Senoh A."/>
            <person name="Mizoguchi H."/>
            <person name="Goto Y."/>
            <person name="Shimizu F."/>
            <person name="Wakebe H."/>
            <person name="Hishigaki H."/>
            <person name="Watanabe T."/>
            <person name="Sugiyama A."/>
            <person name="Takemoto M."/>
            <person name="Kawakami B."/>
            <person name="Yamazaki M."/>
            <person name="Watanabe K."/>
            <person name="Kumagai A."/>
            <person name="Itakura S."/>
            <person name="Fukuzumi Y."/>
            <person name="Fujimori Y."/>
            <person name="Komiyama M."/>
            <person name="Tashiro H."/>
            <person name="Tanigami A."/>
            <person name="Fujiwara T."/>
            <person name="Ono T."/>
            <person name="Yamada K."/>
            <person name="Fujii Y."/>
            <person name="Ozaki K."/>
            <person name="Hirao M."/>
            <person name="Ohmori Y."/>
            <person name="Kawabata A."/>
            <person name="Hikiji T."/>
            <person name="Kobatake N."/>
            <person name="Inagaki H."/>
            <person name="Ikema Y."/>
            <person name="Okamoto S."/>
            <person name="Okitani R."/>
            <person name="Kawakami T."/>
            <person name="Noguchi S."/>
            <person name="Itoh T."/>
            <person name="Shigeta K."/>
            <person name="Senba T."/>
            <person name="Matsumura K."/>
            <person name="Nakajima Y."/>
            <person name="Mizuno T."/>
            <person name="Morinaga M."/>
            <person name="Sasaki M."/>
            <person name="Togashi T."/>
            <person name="Oyama M."/>
            <person name="Hata H."/>
            <person name="Watanabe M."/>
            <person name="Komatsu T."/>
            <person name="Mizushima-Sugano J."/>
            <person name="Satoh T."/>
            <person name="Shirai Y."/>
            <person name="Takahashi Y."/>
            <person name="Nakagawa K."/>
            <person name="Okumura K."/>
            <person name="Nagase T."/>
            <person name="Nomura N."/>
            <person name="Kikuchi H."/>
            <person name="Masuho Y."/>
            <person name="Yamashita R."/>
            <person name="Nakai K."/>
            <person name="Yada T."/>
            <person name="Nakamura Y."/>
            <person name="Ohara O."/>
            <person name="Isogai T."/>
            <person name="Sugano S."/>
        </authorList>
    </citation>
    <scope>NUCLEOTIDE SEQUENCE [LARGE SCALE MRNA]</scope>
    <source>
        <tissue>Colon</tissue>
    </source>
</reference>
<reference key="5">
    <citation type="journal article" date="2003" name="Science">
        <title>Human chromosome 7: DNA sequence and biology.</title>
        <authorList>
            <person name="Scherer S.W."/>
            <person name="Cheung J."/>
            <person name="MacDonald J.R."/>
            <person name="Osborne L.R."/>
            <person name="Nakabayashi K."/>
            <person name="Herbrick J.-A."/>
            <person name="Carson A.R."/>
            <person name="Parker-Katiraee L."/>
            <person name="Skaug J."/>
            <person name="Khaja R."/>
            <person name="Zhang J."/>
            <person name="Hudek A.K."/>
            <person name="Li M."/>
            <person name="Haddad M."/>
            <person name="Duggan G.E."/>
            <person name="Fernandez B.A."/>
            <person name="Kanematsu E."/>
            <person name="Gentles S."/>
            <person name="Christopoulos C.C."/>
            <person name="Choufani S."/>
            <person name="Kwasnicka D."/>
            <person name="Zheng X.H."/>
            <person name="Lai Z."/>
            <person name="Nusskern D.R."/>
            <person name="Zhang Q."/>
            <person name="Gu Z."/>
            <person name="Lu F."/>
            <person name="Zeesman S."/>
            <person name="Nowaczyk M.J."/>
            <person name="Teshima I."/>
            <person name="Chitayat D."/>
            <person name="Shuman C."/>
            <person name="Weksberg R."/>
            <person name="Zackai E.H."/>
            <person name="Grebe T.A."/>
            <person name="Cox S.R."/>
            <person name="Kirkpatrick S.J."/>
            <person name="Rahman N."/>
            <person name="Friedman J.M."/>
            <person name="Heng H.H.Q."/>
            <person name="Pelicci P.G."/>
            <person name="Lo-Coco F."/>
            <person name="Belloni E."/>
            <person name="Shaffer L.G."/>
            <person name="Pober B."/>
            <person name="Morton C.C."/>
            <person name="Gusella J.F."/>
            <person name="Bruns G.A.P."/>
            <person name="Korf B.R."/>
            <person name="Quade B.J."/>
            <person name="Ligon A.H."/>
            <person name="Ferguson H."/>
            <person name="Higgins A.W."/>
            <person name="Leach N.T."/>
            <person name="Herrick S.R."/>
            <person name="Lemyre E."/>
            <person name="Farra C.G."/>
            <person name="Kim H.-G."/>
            <person name="Summers A.M."/>
            <person name="Gripp K.W."/>
            <person name="Roberts W."/>
            <person name="Szatmari P."/>
            <person name="Winsor E.J.T."/>
            <person name="Grzeschik K.-H."/>
            <person name="Teebi A."/>
            <person name="Minassian B.A."/>
            <person name="Kere J."/>
            <person name="Armengol L."/>
            <person name="Pujana M.A."/>
            <person name="Estivill X."/>
            <person name="Wilson M.D."/>
            <person name="Koop B.F."/>
            <person name="Tosi S."/>
            <person name="Moore G.E."/>
            <person name="Boright A.P."/>
            <person name="Zlotorynski E."/>
            <person name="Kerem B."/>
            <person name="Kroisel P.M."/>
            <person name="Petek E."/>
            <person name="Oscier D.G."/>
            <person name="Mould S.J."/>
            <person name="Doehner H."/>
            <person name="Doehner K."/>
            <person name="Rommens J.M."/>
            <person name="Vincent J.B."/>
            <person name="Venter J.C."/>
            <person name="Li P.W."/>
            <person name="Mural R.J."/>
            <person name="Adams M.D."/>
            <person name="Tsui L.-C."/>
        </authorList>
    </citation>
    <scope>NUCLEOTIDE SEQUENCE [LARGE SCALE GENOMIC DNA]</scope>
</reference>
<reference key="6">
    <citation type="journal article" date="2004" name="Genome Res.">
        <title>The status, quality, and expansion of the NIH full-length cDNA project: the Mammalian Gene Collection (MGC).</title>
        <authorList>
            <consortium name="The MGC Project Team"/>
        </authorList>
    </citation>
    <scope>NUCLEOTIDE SEQUENCE [LARGE SCALE MRNA]</scope>
    <source>
        <tissue>Brain</tissue>
        <tissue>Skin</tissue>
    </source>
</reference>
<reference key="7">
    <citation type="journal article" date="2003" name="J. Biol. Chem.">
        <title>Specificities of three distinct human chondroitin/dermatan N-acetylgalactosamine 4-O-sulfotransferases demonstrated using partially desulfated dermatan sulfate as an acceptor. Implication of differential roles in dermatan sulfate biosynthesis.</title>
        <authorList>
            <person name="Mikami T."/>
            <person name="Mizumoto S."/>
            <person name="Kago N."/>
            <person name="Kitagawa H."/>
            <person name="Sugahara K."/>
        </authorList>
    </citation>
    <scope>SUBSTRATE SPECIFICITY</scope>
</reference>
<sequence>MTKARLFRLWLVLGSVFMILLIIVYWDSAGAAHFYLHTSFSRPHTGPPLPTPGPDRDRELTADSDVDEFLDKFLSAGVKQSDLPRKETEQPPAPGSMEESVRGYDWSPRDARRSPDQGRQQAERRSVLRGFCANSSLAFPTKERAFDDIPNSELSHLIVDDRHGAIYCYVPKVACTNWKRVMIVLSGSLLHRGAPYRDPLRIPREHVHNASAHLTFNKFWRRYGKLSRHLMKVKLKKYTKFLFVRDPFVRLISAFRSKFELENEEFYRKFAVPMLRLYANHTSLPASAREAFRAGLKVSFANFIQYLLDPHTEKLAPFNEHWRQVYRLCHPCQIDYDFVGKLETLDEDAAQLLQLLQVDRQLRFPPSYRNRTASSWEEDWFAKIPLAWRQQLYKLYEADFVLFGYPKPENLLRD</sequence>
<evidence type="ECO:0000250" key="1"/>
<evidence type="ECO:0000255" key="2"/>
<evidence type="ECO:0000256" key="3">
    <source>
        <dbReference type="SAM" id="MobiDB-lite"/>
    </source>
</evidence>
<evidence type="ECO:0000269" key="4">
    <source>
    </source>
</evidence>
<evidence type="ECO:0000305" key="5"/>
<dbReference type="EC" id="2.8.2.5"/>
<dbReference type="EMBL" id="AF239822">
    <property type="protein sequence ID" value="AAF81692.1"/>
    <property type="molecule type" value="mRNA"/>
</dbReference>
<dbReference type="EMBL" id="AJ289131">
    <property type="protein sequence ID" value="CAB92133.1"/>
    <property type="molecule type" value="mRNA"/>
</dbReference>
<dbReference type="EMBL" id="AY358574">
    <property type="protein sequence ID" value="AAQ88937.1"/>
    <property type="molecule type" value="mRNA"/>
</dbReference>
<dbReference type="EMBL" id="AK313484">
    <property type="protein sequence ID" value="BAG36268.1"/>
    <property type="molecule type" value="mRNA"/>
</dbReference>
<dbReference type="EMBL" id="CH236953">
    <property type="protein sequence ID" value="EAL23955.1"/>
    <property type="molecule type" value="Genomic_DNA"/>
</dbReference>
<dbReference type="EMBL" id="BC002918">
    <property type="protein sequence ID" value="AAH02918.1"/>
    <property type="molecule type" value="mRNA"/>
</dbReference>
<dbReference type="EMBL" id="BC095492">
    <property type="protein sequence ID" value="AAH95492.1"/>
    <property type="molecule type" value="mRNA"/>
</dbReference>
<dbReference type="CCDS" id="CCDS5333.1"/>
<dbReference type="RefSeq" id="NP_001230723.1">
    <property type="nucleotide sequence ID" value="NM_001243794.2"/>
</dbReference>
<dbReference type="RefSeq" id="NP_001230724.1">
    <property type="nucleotide sequence ID" value="NM_001243795.2"/>
</dbReference>
<dbReference type="RefSeq" id="NP_061111.1">
    <property type="nucleotide sequence ID" value="NM_018641.5"/>
</dbReference>
<dbReference type="RefSeq" id="XP_011513745.1">
    <property type="nucleotide sequence ID" value="XM_011515443.3"/>
</dbReference>
<dbReference type="RefSeq" id="XP_011513746.1">
    <property type="nucleotide sequence ID" value="XM_011515444.3"/>
</dbReference>
<dbReference type="RefSeq" id="XP_054214557.1">
    <property type="nucleotide sequence ID" value="XM_054358582.1"/>
</dbReference>
<dbReference type="RefSeq" id="XP_054214558.1">
    <property type="nucleotide sequence ID" value="XM_054358583.1"/>
</dbReference>
<dbReference type="BioGRID" id="120681">
    <property type="interactions" value="314"/>
</dbReference>
<dbReference type="FunCoup" id="Q9NRB3">
    <property type="interactions" value="535"/>
</dbReference>
<dbReference type="IntAct" id="Q9NRB3">
    <property type="interactions" value="63"/>
</dbReference>
<dbReference type="STRING" id="9606.ENSP00000481912"/>
<dbReference type="GlyCosmos" id="Q9NRB3">
    <property type="glycosylation" value="4 sites, No reported glycans"/>
</dbReference>
<dbReference type="GlyGen" id="Q9NRB3">
    <property type="glycosylation" value="8 sites, 3 N-linked glycans (3 sites), 2 O-linked glycans (3 sites)"/>
</dbReference>
<dbReference type="iPTMnet" id="Q9NRB3"/>
<dbReference type="MetOSite" id="Q9NRB3"/>
<dbReference type="PhosphoSitePlus" id="Q9NRB3"/>
<dbReference type="BioMuta" id="CHST12"/>
<dbReference type="jPOST" id="Q9NRB3"/>
<dbReference type="MassIVE" id="Q9NRB3"/>
<dbReference type="PaxDb" id="9606-ENSP00000481912"/>
<dbReference type="PeptideAtlas" id="Q9NRB3"/>
<dbReference type="ProteomicsDB" id="82325"/>
<dbReference type="Antibodypedia" id="24375">
    <property type="antibodies" value="71 antibodies from 23 providers"/>
</dbReference>
<dbReference type="DNASU" id="55501"/>
<dbReference type="Ensembl" id="ENST00000258711.7">
    <property type="protein sequence ID" value="ENSP00000258711.6"/>
    <property type="gene ID" value="ENSG00000136213.10"/>
</dbReference>
<dbReference type="Ensembl" id="ENST00000618655.2">
    <property type="protein sequence ID" value="ENSP00000481912.1"/>
    <property type="gene ID" value="ENSG00000136213.10"/>
</dbReference>
<dbReference type="GeneID" id="55501"/>
<dbReference type="KEGG" id="hsa:55501"/>
<dbReference type="MANE-Select" id="ENST00000618655.2">
    <property type="protein sequence ID" value="ENSP00000481912.1"/>
    <property type="RefSeq nucleotide sequence ID" value="NM_018641.5"/>
    <property type="RefSeq protein sequence ID" value="NP_061111.1"/>
</dbReference>
<dbReference type="UCSC" id="uc003smc.4">
    <property type="organism name" value="human"/>
</dbReference>
<dbReference type="AGR" id="HGNC:17423"/>
<dbReference type="CTD" id="55501"/>
<dbReference type="DisGeNET" id="55501"/>
<dbReference type="GeneCards" id="CHST12"/>
<dbReference type="HGNC" id="HGNC:17423">
    <property type="gene designation" value="CHST12"/>
</dbReference>
<dbReference type="HPA" id="ENSG00000136213">
    <property type="expression patterns" value="Low tissue specificity"/>
</dbReference>
<dbReference type="MIM" id="610129">
    <property type="type" value="gene"/>
</dbReference>
<dbReference type="neXtProt" id="NX_Q9NRB3"/>
<dbReference type="OpenTargets" id="ENSG00000136213"/>
<dbReference type="PharmGKB" id="PA134969008"/>
<dbReference type="VEuPathDB" id="HostDB:ENSG00000136213"/>
<dbReference type="eggNOG" id="KOG4651">
    <property type="taxonomic scope" value="Eukaryota"/>
</dbReference>
<dbReference type="GeneTree" id="ENSGT00940000156614"/>
<dbReference type="HOGENOM" id="CLU_043398_1_0_1"/>
<dbReference type="InParanoid" id="Q9NRB3"/>
<dbReference type="OMA" id="VPMLKMY"/>
<dbReference type="OrthoDB" id="2019940at2759"/>
<dbReference type="PAN-GO" id="Q9NRB3">
    <property type="GO annotations" value="2 GO annotations based on evolutionary models"/>
</dbReference>
<dbReference type="PhylomeDB" id="Q9NRB3"/>
<dbReference type="TreeFam" id="TF325581"/>
<dbReference type="BioCyc" id="MetaCyc:HS06130-MONOMER"/>
<dbReference type="BRENDA" id="2.8.2.5">
    <property type="organism ID" value="2681"/>
</dbReference>
<dbReference type="PathwayCommons" id="Q9NRB3"/>
<dbReference type="Reactome" id="R-HSA-2022870">
    <property type="pathway name" value="Chondroitin sulfate biosynthesis"/>
</dbReference>
<dbReference type="SignaLink" id="Q9NRB3"/>
<dbReference type="BioGRID-ORCS" id="55501">
    <property type="hits" value="14 hits in 1153 CRISPR screens"/>
</dbReference>
<dbReference type="ChiTaRS" id="CHST12">
    <property type="organism name" value="human"/>
</dbReference>
<dbReference type="GeneWiki" id="CHST12"/>
<dbReference type="GenomeRNAi" id="55501"/>
<dbReference type="Pharos" id="Q9NRB3">
    <property type="development level" value="Tbio"/>
</dbReference>
<dbReference type="PRO" id="PR:Q9NRB3"/>
<dbReference type="Proteomes" id="UP000005640">
    <property type="component" value="Chromosome 7"/>
</dbReference>
<dbReference type="RNAct" id="Q9NRB3">
    <property type="molecule type" value="protein"/>
</dbReference>
<dbReference type="Bgee" id="ENSG00000136213">
    <property type="expression patterns" value="Expressed in buccal mucosa cell and 186 other cell types or tissues"/>
</dbReference>
<dbReference type="ExpressionAtlas" id="Q9NRB3">
    <property type="expression patterns" value="baseline and differential"/>
</dbReference>
<dbReference type="GO" id="GO:0000139">
    <property type="term" value="C:Golgi membrane"/>
    <property type="evidence" value="ECO:0000304"/>
    <property type="project" value="Reactome"/>
</dbReference>
<dbReference type="GO" id="GO:0016020">
    <property type="term" value="C:membrane"/>
    <property type="evidence" value="ECO:0007005"/>
    <property type="project" value="UniProtKB"/>
</dbReference>
<dbReference type="GO" id="GO:0050656">
    <property type="term" value="F:3'-phosphoadenosine 5'-phosphosulfate binding"/>
    <property type="evidence" value="ECO:0000303"/>
    <property type="project" value="UniProtKB"/>
</dbReference>
<dbReference type="GO" id="GO:0047756">
    <property type="term" value="F:chondroitin 4-sulfotransferase activity"/>
    <property type="evidence" value="ECO:0000314"/>
    <property type="project" value="UniProtKB"/>
</dbReference>
<dbReference type="GO" id="GO:0008146">
    <property type="term" value="F:sulfotransferase activity"/>
    <property type="evidence" value="ECO:0000318"/>
    <property type="project" value="GO_Central"/>
</dbReference>
<dbReference type="GO" id="GO:0016051">
    <property type="term" value="P:carbohydrate biosynthetic process"/>
    <property type="evidence" value="ECO:0007669"/>
    <property type="project" value="InterPro"/>
</dbReference>
<dbReference type="GO" id="GO:0050650">
    <property type="term" value="P:chondroitin sulfate proteoglycan biosynthetic process"/>
    <property type="evidence" value="ECO:0000314"/>
    <property type="project" value="UniProtKB"/>
</dbReference>
<dbReference type="GO" id="GO:0050651">
    <property type="term" value="P:dermatan sulfate proteoglycan biosynthetic process"/>
    <property type="evidence" value="ECO:0000314"/>
    <property type="project" value="UniProtKB"/>
</dbReference>
<dbReference type="GO" id="GO:0030166">
    <property type="term" value="P:proteoglycan biosynthetic process"/>
    <property type="evidence" value="ECO:0000318"/>
    <property type="project" value="GO_Central"/>
</dbReference>
<dbReference type="InterPro" id="IPR018011">
    <property type="entry name" value="Carb_sulfotrans_8-10"/>
</dbReference>
<dbReference type="InterPro" id="IPR005331">
    <property type="entry name" value="Sulfotransferase"/>
</dbReference>
<dbReference type="PANTHER" id="PTHR12137">
    <property type="entry name" value="CARBOHYDRATE SULFOTRANSFERASE"/>
    <property type="match status" value="1"/>
</dbReference>
<dbReference type="PANTHER" id="PTHR12137:SF4">
    <property type="entry name" value="CARBOHYDRATE SULFOTRANSFERASE 12"/>
    <property type="match status" value="1"/>
</dbReference>
<dbReference type="Pfam" id="PF03567">
    <property type="entry name" value="Sulfotransfer_2"/>
    <property type="match status" value="1"/>
</dbReference>